<reference key="1">
    <citation type="journal article" date="2007" name="BMC Biol.">
        <title>A clade uniting the green algae Mesostigma viride and Chlorokybus atmophyticus represents the deepest branch of the Streptophyta in chloroplast genome-based phylogenies.</title>
        <authorList>
            <person name="Lemieux C."/>
            <person name="Otis C."/>
            <person name="Turmel M."/>
        </authorList>
    </citation>
    <scope>NUCLEOTIDE SEQUENCE [LARGE SCALE GENOMIC DNA]</scope>
    <source>
        <strain>SAG 48.80</strain>
    </source>
</reference>
<keyword id="KW-0150">Chloroplast</keyword>
<keyword id="KW-0472">Membrane</keyword>
<keyword id="KW-0520">NAD</keyword>
<keyword id="KW-0521">NADP</keyword>
<keyword id="KW-0934">Plastid</keyword>
<keyword id="KW-0618">Plastoquinone</keyword>
<keyword id="KW-0874">Quinone</keyword>
<keyword id="KW-0793">Thylakoid</keyword>
<keyword id="KW-1278">Translocase</keyword>
<keyword id="KW-0812">Transmembrane</keyword>
<keyword id="KW-1133">Transmembrane helix</keyword>
<keyword id="KW-0813">Transport</keyword>
<organism>
    <name type="scientific">Chlorokybus atmophyticus</name>
    <name type="common">Soil alga</name>
    <dbReference type="NCBI Taxonomy" id="3144"/>
    <lineage>
        <taxon>Eukaryota</taxon>
        <taxon>Viridiplantae</taxon>
        <taxon>Streptophyta</taxon>
        <taxon>Chlorokybophyceae</taxon>
        <taxon>Chlorokybales</taxon>
        <taxon>Chlorokybaceae</taxon>
        <taxon>Chlorokybus</taxon>
    </lineage>
</organism>
<name>NU5C_CHLAT</name>
<proteinExistence type="inferred from homology"/>
<comment type="function">
    <text evidence="1">NDH shuttles electrons from NAD(P)H:plastoquinone, via FMN and iron-sulfur (Fe-S) centers, to quinones in the photosynthetic chain and possibly in a chloroplast respiratory chain. The immediate electron acceptor for the enzyme in this species is believed to be plastoquinone. Couples the redox reaction to proton translocation, and thus conserves the redox energy in a proton gradient (By similarity).</text>
</comment>
<comment type="catalytic activity">
    <reaction>
        <text>a plastoquinone + NADH + (n+1) H(+)(in) = a plastoquinol + NAD(+) + n H(+)(out)</text>
        <dbReference type="Rhea" id="RHEA:42608"/>
        <dbReference type="Rhea" id="RHEA-COMP:9561"/>
        <dbReference type="Rhea" id="RHEA-COMP:9562"/>
        <dbReference type="ChEBI" id="CHEBI:15378"/>
        <dbReference type="ChEBI" id="CHEBI:17757"/>
        <dbReference type="ChEBI" id="CHEBI:57540"/>
        <dbReference type="ChEBI" id="CHEBI:57945"/>
        <dbReference type="ChEBI" id="CHEBI:62192"/>
    </reaction>
</comment>
<comment type="catalytic activity">
    <reaction>
        <text>a plastoquinone + NADPH + (n+1) H(+)(in) = a plastoquinol + NADP(+) + n H(+)(out)</text>
        <dbReference type="Rhea" id="RHEA:42612"/>
        <dbReference type="Rhea" id="RHEA-COMP:9561"/>
        <dbReference type="Rhea" id="RHEA-COMP:9562"/>
        <dbReference type="ChEBI" id="CHEBI:15378"/>
        <dbReference type="ChEBI" id="CHEBI:17757"/>
        <dbReference type="ChEBI" id="CHEBI:57783"/>
        <dbReference type="ChEBI" id="CHEBI:58349"/>
        <dbReference type="ChEBI" id="CHEBI:62192"/>
    </reaction>
</comment>
<comment type="subunit">
    <text evidence="1">NDH is composed of at least 16 different subunits, 5 of which are encoded in the nucleus.</text>
</comment>
<comment type="subcellular location">
    <subcellularLocation>
        <location evidence="1">Plastid</location>
        <location evidence="1">Chloroplast thylakoid membrane</location>
        <topology evidence="1">Multi-pass membrane protein</topology>
    </subcellularLocation>
</comment>
<comment type="similarity">
    <text evidence="3">Belongs to the complex I subunit 5 family.</text>
</comment>
<protein>
    <recommendedName>
        <fullName>NAD(P)H-quinone oxidoreductase subunit 5, chloroplastic</fullName>
        <ecNumber>7.1.1.-</ecNumber>
    </recommendedName>
    <alternativeName>
        <fullName>NAD(P)H dehydrogenase subunit 5</fullName>
    </alternativeName>
    <alternativeName>
        <fullName>NADH-plastoquinone oxidoreductase subunit 5</fullName>
    </alternativeName>
</protein>
<geneLocation type="chloroplast"/>
<sequence>MEFIYRYAWLIPILPFLGSMIIGLGLISLRRATQTLRWRFAFFNIVLLGIALIFSISILISQLNGHPPYKWLIEWIVTNQFSLEIGYSIDPLTSVMLVLVTSVAILVMIYSDSYMSYDQGYVRFFAYLSLFTASMLGLVLSPNLVQIYVFWELVGMCSYLLIGFWFTRPAAADACQKAFVTNRVGDFGLFLGILGLYWVTGSFEFQTISNRLSNVLLGDFVLPGSHPVQVELLVLFNLLVFLGPMAKSAQFPLHVWLPDAMEGPTPISALIHAATMVAAGVFLVARMFPIFNQFPIVMGFIAWIGAITAIIAAIIAVTQNDLKKGLAYSTISQLGYMIMAMGVGSYTAGLFHLITHAYSKALLFLGSGSVIHGMEPVVGFNPSKNQNMLFMGKMREFMPVTAITFLLGTLSLCGIPPMACFWSKDEILSQTFQAQPILWIIAWVTAGLTSFYMFRMYFLVFEGKQFRGGEFIYDVRAKSLPKESNKKILIPLIILALVTTLVGFVGTPFNNMFAKFINLTRLEEHPFEWNEFLSMSGSSVGIALIGLTLASLIYKESKIDANQIANTLTPLYKLSFNKFYIDHIYQIGFIKVNRSLAQKALELDQQIIDGFINFTGFFTIMTGEILKYVENGRVQSYVFVIIFATLIFVLASQGF</sequence>
<feature type="chain" id="PRO_0000360922" description="NAD(P)H-quinone oxidoreductase subunit 5, chloroplastic">
    <location>
        <begin position="1"/>
        <end position="655"/>
    </location>
</feature>
<feature type="transmembrane region" description="Helical" evidence="2">
    <location>
        <begin position="7"/>
        <end position="27"/>
    </location>
</feature>
<feature type="transmembrane region" description="Helical" evidence="2">
    <location>
        <begin position="40"/>
        <end position="60"/>
    </location>
</feature>
<feature type="transmembrane region" description="Helical" evidence="2">
    <location>
        <begin position="89"/>
        <end position="109"/>
    </location>
</feature>
<feature type="transmembrane region" description="Helical" evidence="2">
    <location>
        <begin position="124"/>
        <end position="144"/>
    </location>
</feature>
<feature type="transmembrane region" description="Helical" evidence="2">
    <location>
        <begin position="147"/>
        <end position="167"/>
    </location>
</feature>
<feature type="transmembrane region" description="Helical" evidence="2">
    <location>
        <begin position="185"/>
        <end position="205"/>
    </location>
</feature>
<feature type="transmembrane region" description="Helical" evidence="2">
    <location>
        <begin position="226"/>
        <end position="246"/>
    </location>
</feature>
<feature type="transmembrane region" description="Helical" evidence="2">
    <location>
        <begin position="265"/>
        <end position="285"/>
    </location>
</feature>
<feature type="transmembrane region" description="Helical" evidence="2">
    <location>
        <begin position="296"/>
        <end position="316"/>
    </location>
</feature>
<feature type="transmembrane region" description="Helical" evidence="2">
    <location>
        <begin position="334"/>
        <end position="354"/>
    </location>
</feature>
<feature type="transmembrane region" description="Helical" evidence="2">
    <location>
        <begin position="361"/>
        <end position="381"/>
    </location>
</feature>
<feature type="transmembrane region" description="Helical" evidence="2">
    <location>
        <begin position="402"/>
        <end position="422"/>
    </location>
</feature>
<feature type="transmembrane region" description="Helical" evidence="2">
    <location>
        <begin position="434"/>
        <end position="454"/>
    </location>
</feature>
<feature type="transmembrane region" description="Helical" evidence="2">
    <location>
        <begin position="488"/>
        <end position="508"/>
    </location>
</feature>
<feature type="transmembrane region" description="Helical" evidence="2">
    <location>
        <begin position="533"/>
        <end position="553"/>
    </location>
</feature>
<feature type="transmembrane region" description="Helical" evidence="2">
    <location>
        <begin position="635"/>
        <end position="655"/>
    </location>
</feature>
<dbReference type="EC" id="7.1.1.-"/>
<dbReference type="EMBL" id="DQ422812">
    <property type="protein sequence ID" value="ABD62194.2"/>
    <property type="molecule type" value="Genomic_DNA"/>
</dbReference>
<dbReference type="RefSeq" id="YP_001019159.1">
    <property type="nucleotide sequence ID" value="NC_008822.1"/>
</dbReference>
<dbReference type="SMR" id="Q19V60"/>
<dbReference type="GeneID" id="4783326"/>
<dbReference type="GO" id="GO:0009535">
    <property type="term" value="C:chloroplast thylakoid membrane"/>
    <property type="evidence" value="ECO:0007669"/>
    <property type="project" value="UniProtKB-SubCell"/>
</dbReference>
<dbReference type="GO" id="GO:0008137">
    <property type="term" value="F:NADH dehydrogenase (ubiquinone) activity"/>
    <property type="evidence" value="ECO:0007669"/>
    <property type="project" value="InterPro"/>
</dbReference>
<dbReference type="GO" id="GO:0048038">
    <property type="term" value="F:quinone binding"/>
    <property type="evidence" value="ECO:0007669"/>
    <property type="project" value="UniProtKB-KW"/>
</dbReference>
<dbReference type="GO" id="GO:0042773">
    <property type="term" value="P:ATP synthesis coupled electron transport"/>
    <property type="evidence" value="ECO:0007669"/>
    <property type="project" value="InterPro"/>
</dbReference>
<dbReference type="GO" id="GO:0015990">
    <property type="term" value="P:electron transport coupled proton transport"/>
    <property type="evidence" value="ECO:0007669"/>
    <property type="project" value="TreeGrafter"/>
</dbReference>
<dbReference type="Gene3D" id="1.20.5.2700">
    <property type="match status" value="1"/>
</dbReference>
<dbReference type="InterPro" id="IPR002128">
    <property type="entry name" value="NADH_UbQ_OxRdtase_chlpt_su5_C"/>
</dbReference>
<dbReference type="InterPro" id="IPR018393">
    <property type="entry name" value="NADHpl_OxRdtase_5_subgr"/>
</dbReference>
<dbReference type="InterPro" id="IPR001750">
    <property type="entry name" value="ND/Mrp_TM"/>
</dbReference>
<dbReference type="InterPro" id="IPR003945">
    <property type="entry name" value="NU5C-like"/>
</dbReference>
<dbReference type="InterPro" id="IPR001516">
    <property type="entry name" value="Proton_antipo_N"/>
</dbReference>
<dbReference type="NCBIfam" id="TIGR01974">
    <property type="entry name" value="NDH_I_L"/>
    <property type="match status" value="1"/>
</dbReference>
<dbReference type="NCBIfam" id="NF005141">
    <property type="entry name" value="PRK06590.1"/>
    <property type="match status" value="1"/>
</dbReference>
<dbReference type="PANTHER" id="PTHR42829">
    <property type="entry name" value="NADH-UBIQUINONE OXIDOREDUCTASE CHAIN 5"/>
    <property type="match status" value="1"/>
</dbReference>
<dbReference type="PANTHER" id="PTHR42829:SF2">
    <property type="entry name" value="NADH-UBIQUINONE OXIDOREDUCTASE CHAIN 5"/>
    <property type="match status" value="1"/>
</dbReference>
<dbReference type="Pfam" id="PF01010">
    <property type="entry name" value="Proton_antipo_C"/>
    <property type="match status" value="1"/>
</dbReference>
<dbReference type="Pfam" id="PF00361">
    <property type="entry name" value="Proton_antipo_M"/>
    <property type="match status" value="1"/>
</dbReference>
<dbReference type="Pfam" id="PF00662">
    <property type="entry name" value="Proton_antipo_N"/>
    <property type="match status" value="1"/>
</dbReference>
<dbReference type="PRINTS" id="PR01434">
    <property type="entry name" value="NADHDHGNASE5"/>
</dbReference>
<dbReference type="PRINTS" id="PR01435">
    <property type="entry name" value="NPOXDRDTASE5"/>
</dbReference>
<gene>
    <name type="primary">ndhF</name>
</gene>
<accession>Q19V60</accession>
<evidence type="ECO:0000250" key="1"/>
<evidence type="ECO:0000255" key="2"/>
<evidence type="ECO:0000305" key="3"/>